<evidence type="ECO:0000255" key="1">
    <source>
        <dbReference type="HAMAP-Rule" id="MF_00161"/>
    </source>
</evidence>
<keyword id="KW-0064">Aspartyl protease</keyword>
<keyword id="KW-1003">Cell membrane</keyword>
<keyword id="KW-0378">Hydrolase</keyword>
<keyword id="KW-0472">Membrane</keyword>
<keyword id="KW-0645">Protease</keyword>
<keyword id="KW-1185">Reference proteome</keyword>
<keyword id="KW-0812">Transmembrane</keyword>
<keyword id="KW-1133">Transmembrane helix</keyword>
<proteinExistence type="inferred from homology"/>
<organism>
    <name type="scientific">Streptococcus pyogenes serotype M1</name>
    <dbReference type="NCBI Taxonomy" id="301447"/>
    <lineage>
        <taxon>Bacteria</taxon>
        <taxon>Bacillati</taxon>
        <taxon>Bacillota</taxon>
        <taxon>Bacilli</taxon>
        <taxon>Lactobacillales</taxon>
        <taxon>Streptococcaceae</taxon>
        <taxon>Streptococcus</taxon>
    </lineage>
</organism>
<reference key="1">
    <citation type="journal article" date="2001" name="Proc. Natl. Acad. Sci. U.S.A.">
        <title>Complete genome sequence of an M1 strain of Streptococcus pyogenes.</title>
        <authorList>
            <person name="Ferretti J.J."/>
            <person name="McShan W.M."/>
            <person name="Ajdic D.J."/>
            <person name="Savic D.J."/>
            <person name="Savic G."/>
            <person name="Lyon K."/>
            <person name="Primeaux C."/>
            <person name="Sezate S."/>
            <person name="Suvorov A.N."/>
            <person name="Kenton S."/>
            <person name="Lai H.S."/>
            <person name="Lin S.P."/>
            <person name="Qian Y."/>
            <person name="Jia H.G."/>
            <person name="Najar F.Z."/>
            <person name="Ren Q."/>
            <person name="Zhu H."/>
            <person name="Song L."/>
            <person name="White J."/>
            <person name="Yuan X."/>
            <person name="Clifton S.W."/>
            <person name="Roe B.A."/>
            <person name="McLaughlin R.E."/>
        </authorList>
    </citation>
    <scope>NUCLEOTIDE SEQUENCE [LARGE SCALE GENOMIC DNA]</scope>
    <source>
        <strain>ATCC 700294 / SF370 / Serotype M1</strain>
    </source>
</reference>
<reference key="2">
    <citation type="journal article" date="2005" name="J. Infect. Dis.">
        <title>Evolutionary origin and emergence of a highly successful clone of serotype M1 group A Streptococcus involved multiple horizontal gene transfer events.</title>
        <authorList>
            <person name="Sumby P."/>
            <person name="Porcella S.F."/>
            <person name="Madrigal A.G."/>
            <person name="Barbian K.D."/>
            <person name="Virtaneva K."/>
            <person name="Ricklefs S.M."/>
            <person name="Sturdevant D.E."/>
            <person name="Graham M.R."/>
            <person name="Vuopio-Varkila J."/>
            <person name="Hoe N.P."/>
            <person name="Musser J.M."/>
        </authorList>
    </citation>
    <scope>NUCLEOTIDE SEQUENCE [LARGE SCALE GENOMIC DNA]</scope>
    <source>
        <strain>ATCC BAA-947 / MGAS5005 / Serotype M1</strain>
    </source>
</reference>
<sequence>MKKRLFVLSLILLVALDQLSKFWIVSHIALGEVKPFIPGIVSLTYLQNNGAAFSILQDQQWFFVVITVLVIGYAIYYLATHPHLNIWKQLALLLIISGGIGNFIDRLRLAYVIDMIHLDFVDFAIFNVADSYLTVGVILLLICLWKEEDYGN</sequence>
<gene>
    <name evidence="1" type="primary">lspA</name>
    <name type="synonym">lsp</name>
    <name type="ordered locus">SPy_0826</name>
    <name type="ordered locus">M5005_Spy0637</name>
</gene>
<protein>
    <recommendedName>
        <fullName evidence="1">Lipoprotein signal peptidase</fullName>
        <ecNumber evidence="1">3.4.23.36</ecNumber>
    </recommendedName>
    <alternativeName>
        <fullName evidence="1">Prolipoprotein signal peptidase</fullName>
    </alternativeName>
    <alternativeName>
        <fullName evidence="1">Signal peptidase II</fullName>
        <shortName evidence="1">SPase II</shortName>
    </alternativeName>
</protein>
<accession>Q9A0D2</accession>
<accession>Q48ZG3</accession>
<feature type="chain" id="PRO_0000178823" description="Lipoprotein signal peptidase">
    <location>
        <begin position="1"/>
        <end position="152"/>
    </location>
</feature>
<feature type="transmembrane region" description="Helical" evidence="1">
    <location>
        <begin position="5"/>
        <end position="25"/>
    </location>
</feature>
<feature type="transmembrane region" description="Helical" evidence="1">
    <location>
        <begin position="61"/>
        <end position="81"/>
    </location>
</feature>
<feature type="transmembrane region" description="Helical" evidence="1">
    <location>
        <begin position="84"/>
        <end position="104"/>
    </location>
</feature>
<feature type="transmembrane region" description="Helical" evidence="1">
    <location>
        <begin position="125"/>
        <end position="145"/>
    </location>
</feature>
<feature type="active site" evidence="1">
    <location>
        <position position="114"/>
    </location>
</feature>
<feature type="active site" evidence="1">
    <location>
        <position position="130"/>
    </location>
</feature>
<comment type="function">
    <text evidence="1">This protein specifically catalyzes the removal of signal peptides from prolipoproteins.</text>
</comment>
<comment type="catalytic activity">
    <reaction evidence="1">
        <text>Release of signal peptides from bacterial membrane prolipoproteins. Hydrolyzes -Xaa-Yaa-Zaa-|-(S,diacylglyceryl)Cys-, in which Xaa is hydrophobic (preferably Leu), and Yaa (Ala or Ser) and Zaa (Gly or Ala) have small, neutral side chains.</text>
        <dbReference type="EC" id="3.4.23.36"/>
    </reaction>
</comment>
<comment type="pathway">
    <text evidence="1">Protein modification; lipoprotein biosynthesis (signal peptide cleavage).</text>
</comment>
<comment type="subcellular location">
    <subcellularLocation>
        <location evidence="1">Cell membrane</location>
        <topology evidence="1">Multi-pass membrane protein</topology>
    </subcellularLocation>
</comment>
<comment type="similarity">
    <text evidence="1">Belongs to the peptidase A8 family.</text>
</comment>
<dbReference type="EC" id="3.4.23.36" evidence="1"/>
<dbReference type="EMBL" id="AE004092">
    <property type="protein sequence ID" value="AAK33759.1"/>
    <property type="molecule type" value="Genomic_DNA"/>
</dbReference>
<dbReference type="EMBL" id="CP000017">
    <property type="protein sequence ID" value="AAZ51255.1"/>
    <property type="molecule type" value="Genomic_DNA"/>
</dbReference>
<dbReference type="RefSeq" id="NP_269038.1">
    <property type="nucleotide sequence ID" value="NC_002737.2"/>
</dbReference>
<dbReference type="SMR" id="Q9A0D2"/>
<dbReference type="PaxDb" id="1314-HKU360_00650"/>
<dbReference type="KEGG" id="spy:SPy_0826"/>
<dbReference type="KEGG" id="spz:M5005_Spy0637"/>
<dbReference type="PATRIC" id="fig|160490.10.peg.706"/>
<dbReference type="HOGENOM" id="CLU_083252_3_3_9"/>
<dbReference type="OMA" id="NRWYFPA"/>
<dbReference type="UniPathway" id="UPA00665"/>
<dbReference type="PHI-base" id="PHI:9799"/>
<dbReference type="Proteomes" id="UP000000750">
    <property type="component" value="Chromosome"/>
</dbReference>
<dbReference type="GO" id="GO:0005886">
    <property type="term" value="C:plasma membrane"/>
    <property type="evidence" value="ECO:0007669"/>
    <property type="project" value="UniProtKB-SubCell"/>
</dbReference>
<dbReference type="GO" id="GO:0004190">
    <property type="term" value="F:aspartic-type endopeptidase activity"/>
    <property type="evidence" value="ECO:0007669"/>
    <property type="project" value="UniProtKB-UniRule"/>
</dbReference>
<dbReference type="GO" id="GO:0006508">
    <property type="term" value="P:proteolysis"/>
    <property type="evidence" value="ECO:0007669"/>
    <property type="project" value="UniProtKB-KW"/>
</dbReference>
<dbReference type="HAMAP" id="MF_00161">
    <property type="entry name" value="LspA"/>
    <property type="match status" value="1"/>
</dbReference>
<dbReference type="InterPro" id="IPR001872">
    <property type="entry name" value="Peptidase_A8"/>
</dbReference>
<dbReference type="NCBIfam" id="TIGR00077">
    <property type="entry name" value="lspA"/>
    <property type="match status" value="1"/>
</dbReference>
<dbReference type="PANTHER" id="PTHR33695">
    <property type="entry name" value="LIPOPROTEIN SIGNAL PEPTIDASE"/>
    <property type="match status" value="1"/>
</dbReference>
<dbReference type="PANTHER" id="PTHR33695:SF1">
    <property type="entry name" value="LIPOPROTEIN SIGNAL PEPTIDASE"/>
    <property type="match status" value="1"/>
</dbReference>
<dbReference type="Pfam" id="PF01252">
    <property type="entry name" value="Peptidase_A8"/>
    <property type="match status" value="1"/>
</dbReference>
<dbReference type="PRINTS" id="PR00781">
    <property type="entry name" value="LIPOSIGPTASE"/>
</dbReference>
<dbReference type="PROSITE" id="PS00855">
    <property type="entry name" value="SPASE_II"/>
    <property type="match status" value="1"/>
</dbReference>
<name>LSPA_STRP1</name>